<dbReference type="EMBL" id="CP000542">
    <property type="protein sequence ID" value="ABM58492.1"/>
    <property type="status" value="ALT_INIT"/>
    <property type="molecule type" value="Genomic_DNA"/>
</dbReference>
<dbReference type="RefSeq" id="WP_157048506.1">
    <property type="nucleotide sequence ID" value="NC_008786.1"/>
</dbReference>
<dbReference type="SMR" id="A1WLI5"/>
<dbReference type="STRING" id="391735.Veis_2751"/>
<dbReference type="GeneID" id="76463446"/>
<dbReference type="KEGG" id="vei:Veis_2751"/>
<dbReference type="eggNOG" id="COG0779">
    <property type="taxonomic scope" value="Bacteria"/>
</dbReference>
<dbReference type="HOGENOM" id="CLU_070525_1_0_4"/>
<dbReference type="OrthoDB" id="9805006at2"/>
<dbReference type="Proteomes" id="UP000000374">
    <property type="component" value="Chromosome"/>
</dbReference>
<dbReference type="GO" id="GO:0005829">
    <property type="term" value="C:cytosol"/>
    <property type="evidence" value="ECO:0007669"/>
    <property type="project" value="TreeGrafter"/>
</dbReference>
<dbReference type="GO" id="GO:0000028">
    <property type="term" value="P:ribosomal small subunit assembly"/>
    <property type="evidence" value="ECO:0007669"/>
    <property type="project" value="TreeGrafter"/>
</dbReference>
<dbReference type="GO" id="GO:0006412">
    <property type="term" value="P:translation"/>
    <property type="evidence" value="ECO:0007669"/>
    <property type="project" value="TreeGrafter"/>
</dbReference>
<dbReference type="CDD" id="cd01734">
    <property type="entry name" value="YlxS_C"/>
    <property type="match status" value="1"/>
</dbReference>
<dbReference type="HAMAP" id="MF_01077">
    <property type="entry name" value="RimP"/>
    <property type="match status" value="1"/>
</dbReference>
<dbReference type="InterPro" id="IPR003728">
    <property type="entry name" value="Ribosome_maturation_RimP"/>
</dbReference>
<dbReference type="InterPro" id="IPR028998">
    <property type="entry name" value="RimP_C"/>
</dbReference>
<dbReference type="InterPro" id="IPR028989">
    <property type="entry name" value="RimP_N"/>
</dbReference>
<dbReference type="InterPro" id="IPR035956">
    <property type="entry name" value="RimP_N_sf"/>
</dbReference>
<dbReference type="NCBIfam" id="NF011235">
    <property type="entry name" value="PRK14642.1"/>
    <property type="match status" value="1"/>
</dbReference>
<dbReference type="PANTHER" id="PTHR33867">
    <property type="entry name" value="RIBOSOME MATURATION FACTOR RIMP"/>
    <property type="match status" value="1"/>
</dbReference>
<dbReference type="PANTHER" id="PTHR33867:SF1">
    <property type="entry name" value="RIBOSOME MATURATION FACTOR RIMP"/>
    <property type="match status" value="1"/>
</dbReference>
<dbReference type="Pfam" id="PF02576">
    <property type="entry name" value="RimP_N"/>
    <property type="match status" value="1"/>
</dbReference>
<dbReference type="SUPFAM" id="SSF75420">
    <property type="entry name" value="YhbC-like, N-terminal domain"/>
    <property type="match status" value="1"/>
</dbReference>
<keyword id="KW-0963">Cytoplasm</keyword>
<keyword id="KW-1185">Reference proteome</keyword>
<keyword id="KW-0690">Ribosome biogenesis</keyword>
<feature type="chain" id="PRO_0000384804" description="Ribosome maturation factor RimP">
    <location>
        <begin position="1"/>
        <end position="245"/>
    </location>
</feature>
<comment type="function">
    <text evidence="1">Required for maturation of 30S ribosomal subunits.</text>
</comment>
<comment type="subcellular location">
    <subcellularLocation>
        <location evidence="1">Cytoplasm</location>
    </subcellularLocation>
</comment>
<comment type="similarity">
    <text evidence="1">Belongs to the RimP family.</text>
</comment>
<comment type="sequence caution" evidence="2">
    <conflict type="erroneous initiation">
        <sequence resource="EMBL-CDS" id="ABM58492"/>
    </conflict>
</comment>
<protein>
    <recommendedName>
        <fullName evidence="1">Ribosome maturation factor RimP</fullName>
    </recommendedName>
</protein>
<sequence length="245" mass="25223">MALQQIVEPIVTGLGYALVEIERSAGGLLRVTIDLPWPAPNGAAAEPAPDGALALEPAPSGAGTLDTAPDGATALETVPSGATALETAPNGAVSTPAQSVTLEDCEKVTRQLQFALEVDGVQYQRLEVASPGIDRPLRGEQDLLRFAGSVIDITLKAPIGGAAAGKVGATRKKFRGTLERTASGGWQIVWSDAPPPKPGQRVGKKRLPAPLQALGFSLDEVRDMRLAPIVDFKGRTGKAGAAPAG</sequence>
<accession>A1WLI5</accession>
<organism>
    <name type="scientific">Verminephrobacter eiseniae (strain EF01-2)</name>
    <dbReference type="NCBI Taxonomy" id="391735"/>
    <lineage>
        <taxon>Bacteria</taxon>
        <taxon>Pseudomonadati</taxon>
        <taxon>Pseudomonadota</taxon>
        <taxon>Betaproteobacteria</taxon>
        <taxon>Burkholderiales</taxon>
        <taxon>Comamonadaceae</taxon>
        <taxon>Verminephrobacter</taxon>
    </lineage>
</organism>
<proteinExistence type="inferred from homology"/>
<reference key="1">
    <citation type="submission" date="2006-12" db="EMBL/GenBank/DDBJ databases">
        <title>Complete sequence of chromosome 1 of Verminephrobacter eiseniae EF01-2.</title>
        <authorList>
            <person name="Copeland A."/>
            <person name="Lucas S."/>
            <person name="Lapidus A."/>
            <person name="Barry K."/>
            <person name="Detter J.C."/>
            <person name="Glavina del Rio T."/>
            <person name="Dalin E."/>
            <person name="Tice H."/>
            <person name="Pitluck S."/>
            <person name="Chertkov O."/>
            <person name="Brettin T."/>
            <person name="Bruce D."/>
            <person name="Han C."/>
            <person name="Tapia R."/>
            <person name="Gilna P."/>
            <person name="Schmutz J."/>
            <person name="Larimer F."/>
            <person name="Land M."/>
            <person name="Hauser L."/>
            <person name="Kyrpides N."/>
            <person name="Kim E."/>
            <person name="Stahl D."/>
            <person name="Richardson P."/>
        </authorList>
    </citation>
    <scope>NUCLEOTIDE SEQUENCE [LARGE SCALE GENOMIC DNA]</scope>
    <source>
        <strain>EF01-2</strain>
    </source>
</reference>
<name>RIMP_VEREI</name>
<gene>
    <name evidence="1" type="primary">rimP</name>
    <name type="ordered locus">Veis_2751</name>
</gene>
<evidence type="ECO:0000255" key="1">
    <source>
        <dbReference type="HAMAP-Rule" id="MF_01077"/>
    </source>
</evidence>
<evidence type="ECO:0000305" key="2"/>